<reference key="1">
    <citation type="journal article" date="2004" name="Science">
        <title>The Ashbya gossypii genome as a tool for mapping the ancient Saccharomyces cerevisiae genome.</title>
        <authorList>
            <person name="Dietrich F.S."/>
            <person name="Voegeli S."/>
            <person name="Brachat S."/>
            <person name="Lerch A."/>
            <person name="Gates K."/>
            <person name="Steiner S."/>
            <person name="Mohr C."/>
            <person name="Poehlmann R."/>
            <person name="Luedi P."/>
            <person name="Choi S."/>
            <person name="Wing R.A."/>
            <person name="Flavier A."/>
            <person name="Gaffney T.D."/>
            <person name="Philippsen P."/>
        </authorList>
    </citation>
    <scope>NUCLEOTIDE SEQUENCE [LARGE SCALE GENOMIC DNA]</scope>
    <source>
        <strain>ATCC 10895 / CBS 109.51 / FGSC 9923 / NRRL Y-1056</strain>
    </source>
</reference>
<reference key="2">
    <citation type="journal article" date="2013" name="G3 (Bethesda)">
        <title>Genomes of Ashbya fungi isolated from insects reveal four mating-type loci, numerous translocations, lack of transposons, and distinct gene duplications.</title>
        <authorList>
            <person name="Dietrich F.S."/>
            <person name="Voegeli S."/>
            <person name="Kuo S."/>
            <person name="Philippsen P."/>
        </authorList>
    </citation>
    <scope>GENOME REANNOTATION</scope>
    <source>
        <strain>ATCC 10895 / CBS 109.51 / FGSC 9923 / NRRL Y-1056</strain>
    </source>
</reference>
<protein>
    <recommendedName>
        <fullName>Vacuolar fusion protein CCZ1</fullName>
    </recommendedName>
</protein>
<accession>Q75EN9</accession>
<comment type="function">
    <text evidence="2">In complex with MON1, is required for multiple vacuole delivery pathways including the cytoplasm to vacuole transport (Cvt), autophagy, pexophagy and endocytosis. The MON1-CCZ1 complex acts at the fusion of vesicles with the vacuole, through its regulation of the SNARE complex during the coordinated priming and docking stages of fusion, and particularly at the stage of tethering/docking.</text>
</comment>
<comment type="subunit">
    <text evidence="2">Forms a complex with MON1.</text>
</comment>
<comment type="subcellular location">
    <subcellularLocation>
        <location evidence="1">Endosome</location>
        <location evidence="1">Multivesicular body membrane</location>
        <topology evidence="1">Peripheral membrane protein</topology>
    </subcellularLocation>
    <subcellularLocation>
        <location evidence="1">Prevacuolar compartment membrane</location>
        <topology evidence="1">Peripheral membrane protein</topology>
    </subcellularLocation>
    <subcellularLocation>
        <location evidence="1">Vacuole membrane</location>
        <topology evidence="1">Peripheral membrane protein</topology>
    </subcellularLocation>
    <subcellularLocation>
        <location evidence="2">Vesicle</location>
    </subcellularLocation>
</comment>
<comment type="similarity">
    <text evidence="4">Belongs to the CCZ1 family.</text>
</comment>
<name>CCZ1_EREGS</name>
<organism>
    <name type="scientific">Eremothecium gossypii (strain ATCC 10895 / CBS 109.51 / FGSC 9923 / NRRL Y-1056)</name>
    <name type="common">Yeast</name>
    <name type="synonym">Ashbya gossypii</name>
    <dbReference type="NCBI Taxonomy" id="284811"/>
    <lineage>
        <taxon>Eukaryota</taxon>
        <taxon>Fungi</taxon>
        <taxon>Dikarya</taxon>
        <taxon>Ascomycota</taxon>
        <taxon>Saccharomycotina</taxon>
        <taxon>Saccharomycetes</taxon>
        <taxon>Saccharomycetales</taxon>
        <taxon>Saccharomycetaceae</taxon>
        <taxon>Eremothecium</taxon>
    </lineage>
</organism>
<keyword id="KW-0072">Autophagy</keyword>
<keyword id="KW-0967">Endosome</keyword>
<keyword id="KW-0472">Membrane</keyword>
<keyword id="KW-0653">Protein transport</keyword>
<keyword id="KW-1185">Reference proteome</keyword>
<keyword id="KW-0813">Transport</keyword>
<keyword id="KW-0926">Vacuole</keyword>
<dbReference type="EMBL" id="AE016814">
    <property type="protein sequence ID" value="AAS50405.1"/>
    <property type="molecule type" value="Genomic_DNA"/>
</dbReference>
<dbReference type="RefSeq" id="NP_982581.1">
    <property type="nucleotide sequence ID" value="NM_207934.1"/>
</dbReference>
<dbReference type="FunCoup" id="Q75EN9">
    <property type="interactions" value="120"/>
</dbReference>
<dbReference type="STRING" id="284811.Q75EN9"/>
<dbReference type="EnsemblFungi" id="AAS50405">
    <property type="protein sequence ID" value="AAS50405"/>
    <property type="gene ID" value="AGOS_AAR040C"/>
</dbReference>
<dbReference type="GeneID" id="4618721"/>
<dbReference type="KEGG" id="ago:AGOS_AAR040C"/>
<dbReference type="eggNOG" id="ENOG502QSQV">
    <property type="taxonomic scope" value="Eukaryota"/>
</dbReference>
<dbReference type="HOGENOM" id="CLU_418686_0_0_1"/>
<dbReference type="InParanoid" id="Q75EN9"/>
<dbReference type="OMA" id="YNCLFWY"/>
<dbReference type="OrthoDB" id="240546at2759"/>
<dbReference type="Proteomes" id="UP000000591">
    <property type="component" value="Chromosome I"/>
</dbReference>
<dbReference type="GO" id="GO:0043231">
    <property type="term" value="C:intracellular membrane-bounded organelle"/>
    <property type="evidence" value="ECO:0000318"/>
    <property type="project" value="GO_Central"/>
</dbReference>
<dbReference type="GO" id="GO:0035658">
    <property type="term" value="C:Mon1-Ccz1 complex"/>
    <property type="evidence" value="ECO:0007669"/>
    <property type="project" value="InterPro"/>
</dbReference>
<dbReference type="GO" id="GO:0032585">
    <property type="term" value="C:multivesicular body membrane"/>
    <property type="evidence" value="ECO:0007669"/>
    <property type="project" value="UniProtKB-SubCell"/>
</dbReference>
<dbReference type="GO" id="GO:0005774">
    <property type="term" value="C:vacuolar membrane"/>
    <property type="evidence" value="ECO:0007669"/>
    <property type="project" value="UniProtKB-SubCell"/>
</dbReference>
<dbReference type="GO" id="GO:0006914">
    <property type="term" value="P:autophagy"/>
    <property type="evidence" value="ECO:0007669"/>
    <property type="project" value="UniProtKB-KW"/>
</dbReference>
<dbReference type="GO" id="GO:0015031">
    <property type="term" value="P:protein transport"/>
    <property type="evidence" value="ECO:0007669"/>
    <property type="project" value="UniProtKB-KW"/>
</dbReference>
<dbReference type="GO" id="GO:0016192">
    <property type="term" value="P:vesicle-mediated transport"/>
    <property type="evidence" value="ECO:0000318"/>
    <property type="project" value="GO_Central"/>
</dbReference>
<dbReference type="InterPro" id="IPR013176">
    <property type="entry name" value="Ccz1"/>
</dbReference>
<dbReference type="InterPro" id="IPR043987">
    <property type="entry name" value="CCZ1/INTU/HSP4_longin_1"/>
</dbReference>
<dbReference type="InterPro" id="IPR043989">
    <property type="entry name" value="CCZ1/INTU/HSP4_longin_3"/>
</dbReference>
<dbReference type="PANTHER" id="PTHR13056">
    <property type="entry name" value="VACUOLAR FUSION PROTEIN CCZ1 HOMOLOG-RELATED"/>
    <property type="match status" value="1"/>
</dbReference>
<dbReference type="PANTHER" id="PTHR13056:SF0">
    <property type="entry name" value="VACUOLAR FUSION PROTEIN CCZ1 HOMOLOG-RELATED"/>
    <property type="match status" value="1"/>
</dbReference>
<dbReference type="Pfam" id="PF19031">
    <property type="entry name" value="Intu_longin_1"/>
    <property type="match status" value="1"/>
</dbReference>
<dbReference type="Pfam" id="PF19033">
    <property type="entry name" value="Intu_longin_3"/>
    <property type="match status" value="1"/>
</dbReference>
<dbReference type="PIRSF" id="PIRSF011668">
    <property type="entry name" value="DUF1712_fun"/>
    <property type="match status" value="1"/>
</dbReference>
<gene>
    <name type="primary">CCZ1</name>
    <name type="ordered locus">AAR040C</name>
</gene>
<evidence type="ECO:0000250" key="1"/>
<evidence type="ECO:0000250" key="2">
    <source>
        <dbReference type="UniProtKB" id="P38273"/>
    </source>
</evidence>
<evidence type="ECO:0000256" key="3">
    <source>
        <dbReference type="SAM" id="MobiDB-lite"/>
    </source>
</evidence>
<evidence type="ECO:0000305" key="4"/>
<feature type="chain" id="PRO_0000278848" description="Vacuolar fusion protein CCZ1">
    <location>
        <begin position="1"/>
        <end position="663"/>
    </location>
</feature>
<feature type="region of interest" description="Disordered" evidence="3">
    <location>
        <begin position="503"/>
        <end position="529"/>
    </location>
</feature>
<sequence length="663" mass="76332">MDFIAVYNPAVYAKEADSEAWRQLLLYHSFKEDAEEPTPQNEKLSLIGMIQGIWQFAHNFSEPETRGSVRYVDTQLERRRVIAVEVEDGHFMAFGVEDGKRYGCEYYVRELLQSYHVFRLHCGSMSEFADRGELTDRLNEHVVGYWQALKLVPEAIYASTLASVCWHDGYKVSELELRDRAWESYIKNEILLDSESFLGLKDMCIYKLPRDGRRSAAEYGLLRSFAPEFLSLPELSNWVYHLDRLFETALSSHVLAGHVRLSIGGDEQEEEGELRHDSQPASDVGARMWRNVTMPISMTYDTMSEVGNLTGINTLMSGLNSLTSGFSSMTSRLVRRADRQNSDTASLSLHVDHGFLISPLALEALPESYRYRRFQLRFSTDEPQWYRLLFWYYKDYLCIFIFHENFDKIWDPDYLQAIDAKLYDAMLQLEGSVVTEDNKPGRFAYGVFNKTTKRIECSLPLLRFSDKRSDEKSRQPLKMVVAGIDETLQFLTAGTFATNMATSRTNDEHMGPSATNTLRMPEPTDAPSSSWTLDITKLNLFQGLNENLRLEKMADTDSGTFLDSLSSEKLLQLNVELCRLYTGIRRSEYNKAGIQEEQLLRLNNGILFYISTSPTEDVLILKNWFMDDKYTKAENKRSTSASLLHSLGGDVRRWWNARTNREQ</sequence>
<proteinExistence type="inferred from homology"/>